<evidence type="ECO:0000250" key="1"/>
<evidence type="ECO:0000255" key="2">
    <source>
        <dbReference type="HAMAP-Rule" id="MF_00614"/>
    </source>
</evidence>
<name>FEN_NANEQ</name>
<keyword id="KW-0227">DNA damage</keyword>
<keyword id="KW-0234">DNA repair</keyword>
<keyword id="KW-0235">DNA replication</keyword>
<keyword id="KW-0255">Endonuclease</keyword>
<keyword id="KW-0269">Exonuclease</keyword>
<keyword id="KW-0378">Hydrolase</keyword>
<keyword id="KW-0460">Magnesium</keyword>
<keyword id="KW-0479">Metal-binding</keyword>
<keyword id="KW-0540">Nuclease</keyword>
<keyword id="KW-1185">Reference proteome</keyword>
<reference key="1">
    <citation type="journal article" date="2003" name="Proc. Natl. Acad. Sci. U.S.A.">
        <title>The genome of Nanoarchaeum equitans: insights into early archaeal evolution and derived parasitism.</title>
        <authorList>
            <person name="Waters E."/>
            <person name="Hohn M.J."/>
            <person name="Ahel I."/>
            <person name="Graham D.E."/>
            <person name="Adams M.D."/>
            <person name="Barnstead M."/>
            <person name="Beeson K.Y."/>
            <person name="Bibbs L."/>
            <person name="Bolanos R."/>
            <person name="Keller M."/>
            <person name="Kretz K."/>
            <person name="Lin X."/>
            <person name="Mathur E."/>
            <person name="Ni J."/>
            <person name="Podar M."/>
            <person name="Richardson T."/>
            <person name="Sutton G.G."/>
            <person name="Simon M."/>
            <person name="Soell D."/>
            <person name="Stetter K.O."/>
            <person name="Short J.M."/>
            <person name="Noorderwier M."/>
        </authorList>
    </citation>
    <scope>NUCLEOTIDE SEQUENCE [LARGE SCALE GENOMIC DNA]</scope>
    <source>
        <strain>Kin4-M</strain>
    </source>
</reference>
<dbReference type="EC" id="3.1.-.-" evidence="2"/>
<dbReference type="EMBL" id="AE017199">
    <property type="protein sequence ID" value="AAR38943.1"/>
    <property type="molecule type" value="Genomic_DNA"/>
</dbReference>
<dbReference type="SMR" id="P61942"/>
<dbReference type="STRING" id="228908.NEQ088"/>
<dbReference type="EnsemblBacteria" id="AAR38943">
    <property type="protein sequence ID" value="AAR38943"/>
    <property type="gene ID" value="NEQ088"/>
</dbReference>
<dbReference type="KEGG" id="neq:NEQ088"/>
<dbReference type="PATRIC" id="fig|228908.8.peg.91"/>
<dbReference type="HOGENOM" id="CLU_032444_0_0_2"/>
<dbReference type="Proteomes" id="UP000000578">
    <property type="component" value="Chromosome"/>
</dbReference>
<dbReference type="GO" id="GO:0008409">
    <property type="term" value="F:5'-3' exonuclease activity"/>
    <property type="evidence" value="ECO:0007669"/>
    <property type="project" value="UniProtKB-UniRule"/>
</dbReference>
<dbReference type="GO" id="GO:0017108">
    <property type="term" value="F:5'-flap endonuclease activity"/>
    <property type="evidence" value="ECO:0007669"/>
    <property type="project" value="UniProtKB-UniRule"/>
</dbReference>
<dbReference type="GO" id="GO:0003677">
    <property type="term" value="F:DNA binding"/>
    <property type="evidence" value="ECO:0007669"/>
    <property type="project" value="UniProtKB-UniRule"/>
</dbReference>
<dbReference type="GO" id="GO:0000287">
    <property type="term" value="F:magnesium ion binding"/>
    <property type="evidence" value="ECO:0007669"/>
    <property type="project" value="UniProtKB-UniRule"/>
</dbReference>
<dbReference type="GO" id="GO:0006281">
    <property type="term" value="P:DNA repair"/>
    <property type="evidence" value="ECO:0007669"/>
    <property type="project" value="UniProtKB-UniRule"/>
</dbReference>
<dbReference type="GO" id="GO:0043137">
    <property type="term" value="P:DNA replication, removal of RNA primer"/>
    <property type="evidence" value="ECO:0007669"/>
    <property type="project" value="UniProtKB-UniRule"/>
</dbReference>
<dbReference type="CDD" id="cd09903">
    <property type="entry name" value="H3TH_FEN1-Arc"/>
    <property type="match status" value="1"/>
</dbReference>
<dbReference type="CDD" id="cd09867">
    <property type="entry name" value="PIN_FEN1"/>
    <property type="match status" value="1"/>
</dbReference>
<dbReference type="FunFam" id="3.40.50.1010:FF:000016">
    <property type="entry name" value="Flap endonuclease 1"/>
    <property type="match status" value="1"/>
</dbReference>
<dbReference type="Gene3D" id="1.10.150.20">
    <property type="entry name" value="5' to 3' exonuclease, C-terminal subdomain"/>
    <property type="match status" value="1"/>
</dbReference>
<dbReference type="Gene3D" id="3.40.50.1010">
    <property type="entry name" value="5'-nuclease"/>
    <property type="match status" value="1"/>
</dbReference>
<dbReference type="HAMAP" id="MF_00614">
    <property type="entry name" value="Fen"/>
    <property type="match status" value="1"/>
</dbReference>
<dbReference type="InterPro" id="IPR036279">
    <property type="entry name" value="5-3_exonuclease_C_sf"/>
</dbReference>
<dbReference type="InterPro" id="IPR023426">
    <property type="entry name" value="Flap_endonuc"/>
</dbReference>
<dbReference type="InterPro" id="IPR019973">
    <property type="entry name" value="Flap_endonuc_arc"/>
</dbReference>
<dbReference type="InterPro" id="IPR008918">
    <property type="entry name" value="HhH2"/>
</dbReference>
<dbReference type="InterPro" id="IPR029060">
    <property type="entry name" value="PIN-like_dom_sf"/>
</dbReference>
<dbReference type="InterPro" id="IPR006086">
    <property type="entry name" value="XPG-I_dom"/>
</dbReference>
<dbReference type="InterPro" id="IPR006084">
    <property type="entry name" value="XPG/Rad2"/>
</dbReference>
<dbReference type="InterPro" id="IPR019974">
    <property type="entry name" value="XPG_CS"/>
</dbReference>
<dbReference type="InterPro" id="IPR006085">
    <property type="entry name" value="XPG_DNA_repair_N"/>
</dbReference>
<dbReference type="NCBIfam" id="TIGR03674">
    <property type="entry name" value="fen_arch"/>
    <property type="match status" value="1"/>
</dbReference>
<dbReference type="PANTHER" id="PTHR11081:SF9">
    <property type="entry name" value="FLAP ENDONUCLEASE 1"/>
    <property type="match status" value="1"/>
</dbReference>
<dbReference type="PANTHER" id="PTHR11081">
    <property type="entry name" value="FLAP ENDONUCLEASE FAMILY MEMBER"/>
    <property type="match status" value="1"/>
</dbReference>
<dbReference type="Pfam" id="PF00867">
    <property type="entry name" value="XPG_I"/>
    <property type="match status" value="1"/>
</dbReference>
<dbReference type="Pfam" id="PF00752">
    <property type="entry name" value="XPG_N"/>
    <property type="match status" value="1"/>
</dbReference>
<dbReference type="PRINTS" id="PR00853">
    <property type="entry name" value="XPGRADSUPER"/>
</dbReference>
<dbReference type="SMART" id="SM00279">
    <property type="entry name" value="HhH2"/>
    <property type="match status" value="1"/>
</dbReference>
<dbReference type="SMART" id="SM00484">
    <property type="entry name" value="XPGI"/>
    <property type="match status" value="1"/>
</dbReference>
<dbReference type="SMART" id="SM00485">
    <property type="entry name" value="XPGN"/>
    <property type="match status" value="1"/>
</dbReference>
<dbReference type="SUPFAM" id="SSF47807">
    <property type="entry name" value="5' to 3' exonuclease, C-terminal subdomain"/>
    <property type="match status" value="1"/>
</dbReference>
<dbReference type="SUPFAM" id="SSF88723">
    <property type="entry name" value="PIN domain-like"/>
    <property type="match status" value="1"/>
</dbReference>
<dbReference type="PROSITE" id="PS00841">
    <property type="entry name" value="XPG_1"/>
    <property type="match status" value="1"/>
</dbReference>
<organism>
    <name type="scientific">Nanoarchaeum equitans (strain Kin4-M)</name>
    <dbReference type="NCBI Taxonomy" id="228908"/>
    <lineage>
        <taxon>Archaea</taxon>
        <taxon>Nanobdellota</taxon>
        <taxon>Candidatus Nanoarchaeia</taxon>
        <taxon>Nanoarchaeales</taxon>
        <taxon>Nanoarchaeaceae</taxon>
        <taxon>Nanoarchaeum</taxon>
    </lineage>
</organism>
<proteinExistence type="inferred from homology"/>
<protein>
    <recommendedName>
        <fullName evidence="2">Flap endonuclease 1</fullName>
        <shortName evidence="2">FEN-1</shortName>
        <ecNumber evidence="2">3.1.-.-</ecNumber>
    </recommendedName>
    <alternativeName>
        <fullName evidence="2">Flap structure-specific endonuclease 1</fullName>
    </alternativeName>
</protein>
<accession>P61942</accession>
<gene>
    <name evidence="2" type="primary">fen</name>
    <name type="ordered locus">NEQ088</name>
</gene>
<sequence>MGVNLKEIVDPVKKEIEFKQLFGKVIAIDAFNALYQFLFSIRQDGEPLRDSKGRITSHLSGLFYRTINLLEYGIKPIYVFDGTPPKFKIVAWEKRKKHKEQLESKYKEALKKGNIQEAIKYAKSLGKLDSYMVEEAKKLLEAMGIPYVQAPSEGEAEAAYLTKKGVSDYCGSQDYDSLLFGSPRVVRNITISEKRKLPGKNIYVEVKPEVIELEAVLNYWKITREQLIAIAMLLGTDYNEKVPGIGPKTAIEIVKRFGDPIKVIEYYKIPNGKEIFEFFLNPPVIDFEPKWGKPNKELIFKILVEEHDFNPERVERAIERLEKALNKINQKTLFSFFGS</sequence>
<comment type="function">
    <text evidence="1">Structure-specific nuclease with 5'-flap endonuclease and 5'-3' exonuclease activities involved in DNA replication and repair. During DNA replication, cleaves the 5'-overhanging flap structure that is generated by displacement synthesis when DNA polymerase encounters the 5'-end of a downstream Okazaki fragment. Binds the unpaired 3'-DNA end and kinks the DNA to facilitate 5' cleavage specificity. Cleaves one nucleotide into the double-stranded DNA from the junction in flap DNA, leaving a nick for ligation. Also involved in the base excision repair (BER) pathway. Acts as a genome stabilization factor that prevents flaps from equilibrating into structures that lead to duplications and deletions. Also possesses 5'-3' exonuclease activity on nicked or gapped double-stranded DNA (By similarity).</text>
</comment>
<comment type="cofactor">
    <cofactor evidence="2">
        <name>Mg(2+)</name>
        <dbReference type="ChEBI" id="CHEBI:18420"/>
    </cofactor>
    <text evidence="2">Binds 2 magnesium ions per subunit. They probably participate in the reaction catalyzed by the enzyme. May bind an additional third magnesium ion after substrate binding.</text>
</comment>
<comment type="subunit">
    <text evidence="2">Interacts with PCNA. PCNA stimulates the nuclease activity without altering cleavage specificity.</text>
</comment>
<comment type="similarity">
    <text evidence="2">Belongs to the XPG/RAD2 endonuclease family. FEN1 subfamily.</text>
</comment>
<feature type="chain" id="PRO_0000154057" description="Flap endonuclease 1">
    <location>
        <begin position="1"/>
        <end position="339"/>
    </location>
</feature>
<feature type="region of interest" description="N-domain">
    <location>
        <begin position="1"/>
        <end position="99"/>
    </location>
</feature>
<feature type="region of interest" description="I-domain">
    <location>
        <begin position="117"/>
        <end position="258"/>
    </location>
</feature>
<feature type="region of interest" description="Interaction with PCNA" evidence="2">
    <location>
        <begin position="329"/>
        <end position="337"/>
    </location>
</feature>
<feature type="binding site" evidence="2">
    <location>
        <position position="29"/>
    </location>
    <ligand>
        <name>Mg(2+)</name>
        <dbReference type="ChEBI" id="CHEBI:18420"/>
        <label>1</label>
    </ligand>
</feature>
<feature type="binding site" evidence="2">
    <location>
        <position position="81"/>
    </location>
    <ligand>
        <name>Mg(2+)</name>
        <dbReference type="ChEBI" id="CHEBI:18420"/>
        <label>1</label>
    </ligand>
</feature>
<feature type="binding site" evidence="2">
    <location>
        <position position="153"/>
    </location>
    <ligand>
        <name>Mg(2+)</name>
        <dbReference type="ChEBI" id="CHEBI:18420"/>
        <label>1</label>
    </ligand>
</feature>
<feature type="binding site" evidence="2">
    <location>
        <position position="155"/>
    </location>
    <ligand>
        <name>Mg(2+)</name>
        <dbReference type="ChEBI" id="CHEBI:18420"/>
        <label>1</label>
    </ligand>
</feature>
<feature type="binding site" evidence="2">
    <location>
        <position position="174"/>
    </location>
    <ligand>
        <name>Mg(2+)</name>
        <dbReference type="ChEBI" id="CHEBI:18420"/>
        <label>2</label>
    </ligand>
</feature>
<feature type="binding site" evidence="2">
    <location>
        <position position="176"/>
    </location>
    <ligand>
        <name>Mg(2+)</name>
        <dbReference type="ChEBI" id="CHEBI:18420"/>
        <label>2</label>
    </ligand>
</feature>
<feature type="binding site" evidence="2">
    <location>
        <position position="237"/>
    </location>
    <ligand>
        <name>Mg(2+)</name>
        <dbReference type="ChEBI" id="CHEBI:18420"/>
        <label>2</label>
    </ligand>
</feature>